<gene>
    <name type="primary">SHE9</name>
    <name type="ordered locus">CAGL0M01518g</name>
</gene>
<proteinExistence type="inferred from homology"/>
<reference key="1">
    <citation type="journal article" date="2004" name="Nature">
        <title>Genome evolution in yeasts.</title>
        <authorList>
            <person name="Dujon B."/>
            <person name="Sherman D."/>
            <person name="Fischer G."/>
            <person name="Durrens P."/>
            <person name="Casaregola S."/>
            <person name="Lafontaine I."/>
            <person name="de Montigny J."/>
            <person name="Marck C."/>
            <person name="Neuveglise C."/>
            <person name="Talla E."/>
            <person name="Goffard N."/>
            <person name="Frangeul L."/>
            <person name="Aigle M."/>
            <person name="Anthouard V."/>
            <person name="Babour A."/>
            <person name="Barbe V."/>
            <person name="Barnay S."/>
            <person name="Blanchin S."/>
            <person name="Beckerich J.-M."/>
            <person name="Beyne E."/>
            <person name="Bleykasten C."/>
            <person name="Boisrame A."/>
            <person name="Boyer J."/>
            <person name="Cattolico L."/>
            <person name="Confanioleri F."/>
            <person name="de Daruvar A."/>
            <person name="Despons L."/>
            <person name="Fabre E."/>
            <person name="Fairhead C."/>
            <person name="Ferry-Dumazet H."/>
            <person name="Groppi A."/>
            <person name="Hantraye F."/>
            <person name="Hennequin C."/>
            <person name="Jauniaux N."/>
            <person name="Joyet P."/>
            <person name="Kachouri R."/>
            <person name="Kerrest A."/>
            <person name="Koszul R."/>
            <person name="Lemaire M."/>
            <person name="Lesur I."/>
            <person name="Ma L."/>
            <person name="Muller H."/>
            <person name="Nicaud J.-M."/>
            <person name="Nikolski M."/>
            <person name="Oztas S."/>
            <person name="Ozier-Kalogeropoulos O."/>
            <person name="Pellenz S."/>
            <person name="Potier S."/>
            <person name="Richard G.-F."/>
            <person name="Straub M.-L."/>
            <person name="Suleau A."/>
            <person name="Swennen D."/>
            <person name="Tekaia F."/>
            <person name="Wesolowski-Louvel M."/>
            <person name="Westhof E."/>
            <person name="Wirth B."/>
            <person name="Zeniou-Meyer M."/>
            <person name="Zivanovic Y."/>
            <person name="Bolotin-Fukuhara M."/>
            <person name="Thierry A."/>
            <person name="Bouchier C."/>
            <person name="Caudron B."/>
            <person name="Scarpelli C."/>
            <person name="Gaillardin C."/>
            <person name="Weissenbach J."/>
            <person name="Wincker P."/>
            <person name="Souciet J.-L."/>
        </authorList>
    </citation>
    <scope>NUCLEOTIDE SEQUENCE [LARGE SCALE GENOMIC DNA]</scope>
    <source>
        <strain>ATCC 2001 / BCRC 20586 / JCM 3761 / NBRC 0622 / NRRL Y-65 / CBS 138</strain>
    </source>
</reference>
<accession>Q6FK33</accession>
<organism>
    <name type="scientific">Candida glabrata (strain ATCC 2001 / BCRC 20586 / JCM 3761 / NBRC 0622 / NRRL Y-65 / CBS 138)</name>
    <name type="common">Yeast</name>
    <name type="synonym">Nakaseomyces glabratus</name>
    <dbReference type="NCBI Taxonomy" id="284593"/>
    <lineage>
        <taxon>Eukaryota</taxon>
        <taxon>Fungi</taxon>
        <taxon>Dikarya</taxon>
        <taxon>Ascomycota</taxon>
        <taxon>Saccharomycotina</taxon>
        <taxon>Saccharomycetes</taxon>
        <taxon>Saccharomycetales</taxon>
        <taxon>Saccharomycetaceae</taxon>
        <taxon>Nakaseomyces</taxon>
    </lineage>
</organism>
<protein>
    <recommendedName>
        <fullName>Sensitive to high expression protein 9 homolog, mitochondrial</fullName>
    </recommendedName>
</protein>
<sequence length="405" mass="47733">MYSYRYLRPVSRSGRAILIQRQAYLRNITFTHFRCEENKSSASKRPTGNALNTKLNELNGSLNNLWNKFLEGRGVFQHHAKNIRKSIQEANKKIAEQEKESKDAKINYKKDELTNEEIKDLPSERELHRKKWSRKLEFYLDSLQETLFTATKALNDVTGYSSIQKLKNSINLINEKLDATRKARTDLKLQYTKAIESRTLSQKQLNELLQRKSSWSPSDLENFTKLYKDDAINQQTEKELKEKVRDIEKKEEQLTDDLYRAILTRYHEEQIWSDKIRRTSTWGTFILMGFNLVLFIIFQLLLEPWKRRRLTGSFEGKVRHALELHSQEQETKIRDFLEEIKTKESNNIANEQKTITKLSFWDKLRNTFQNSTGLSLTQFNMLELTVTAINSFLVGILFTLLLHAL</sequence>
<name>SHE9_CANGA</name>
<evidence type="ECO:0000250" key="1"/>
<evidence type="ECO:0000255" key="2"/>
<evidence type="ECO:0000305" key="3"/>
<feature type="transit peptide" description="Mitochondrion" evidence="2">
    <location>
        <begin position="1"/>
        <end status="unknown"/>
    </location>
</feature>
<feature type="chain" id="PRO_0000351053" description="Sensitive to high expression protein 9 homolog, mitochondrial">
    <location>
        <begin status="unknown"/>
        <end position="405"/>
    </location>
</feature>
<feature type="topological domain" description="Mitochondrial matrix" evidence="2">
    <location>
        <begin status="unknown"/>
        <end position="281"/>
    </location>
</feature>
<feature type="transmembrane region" description="Helical" evidence="2">
    <location>
        <begin position="282"/>
        <end position="302"/>
    </location>
</feature>
<feature type="topological domain" description="Mitochondrial intermembrane" evidence="2">
    <location>
        <begin position="303"/>
        <end position="381"/>
    </location>
</feature>
<feature type="transmembrane region" description="Helical" evidence="2">
    <location>
        <begin position="382"/>
        <end position="402"/>
    </location>
</feature>
<feature type="topological domain" description="Mitochondrial matrix" evidence="2">
    <location>
        <begin position="403"/>
        <end position="405"/>
    </location>
</feature>
<feature type="coiled-coil region" evidence="2">
    <location>
        <begin position="76"/>
        <end position="118"/>
    </location>
</feature>
<feature type="coiled-coil region" evidence="2">
    <location>
        <begin position="161"/>
        <end position="194"/>
    </location>
</feature>
<feature type="coiled-coil region" evidence="2">
    <location>
        <begin position="230"/>
        <end position="261"/>
    </location>
</feature>
<feature type="coiled-coil region" evidence="2">
    <location>
        <begin position="321"/>
        <end position="347"/>
    </location>
</feature>
<comment type="function">
    <text evidence="1">Required for the maintenance of the structure of the mitochondrial inner membrane. Involved in mitochondrial morphology. Causes growth arrest when highly overexpressed (By similarity).</text>
</comment>
<comment type="subunit">
    <text evidence="1">Homooligomer.</text>
</comment>
<comment type="subcellular location">
    <subcellularLocation>
        <location evidence="1">Mitochondrion inner membrane</location>
        <topology evidence="1">Multi-pass membrane protein</topology>
    </subcellularLocation>
</comment>
<comment type="similarity">
    <text evidence="3">Belongs to the SHE9 family.</text>
</comment>
<keyword id="KW-0175">Coiled coil</keyword>
<keyword id="KW-0472">Membrane</keyword>
<keyword id="KW-0496">Mitochondrion</keyword>
<keyword id="KW-0999">Mitochondrion inner membrane</keyword>
<keyword id="KW-1185">Reference proteome</keyword>
<keyword id="KW-0809">Transit peptide</keyword>
<keyword id="KW-0812">Transmembrane</keyword>
<keyword id="KW-1133">Transmembrane helix</keyword>
<dbReference type="EMBL" id="CR380959">
    <property type="protein sequence ID" value="CAG62387.1"/>
    <property type="molecule type" value="Genomic_DNA"/>
</dbReference>
<dbReference type="RefSeq" id="XP_449411.1">
    <property type="nucleotide sequence ID" value="XM_449411.1"/>
</dbReference>
<dbReference type="SMR" id="Q6FK33"/>
<dbReference type="FunCoup" id="Q6FK33">
    <property type="interactions" value="57"/>
</dbReference>
<dbReference type="STRING" id="284593.Q6FK33"/>
<dbReference type="EnsemblFungi" id="CAGL0M01518g-T">
    <property type="protein sequence ID" value="CAGL0M01518g-T-p1"/>
    <property type="gene ID" value="CAGL0M01518g"/>
</dbReference>
<dbReference type="GeneID" id="2891180"/>
<dbReference type="KEGG" id="cgr:2891180"/>
<dbReference type="CGD" id="CAL0136279">
    <property type="gene designation" value="SHE9"/>
</dbReference>
<dbReference type="VEuPathDB" id="FungiDB:B1J91_M01518g"/>
<dbReference type="VEuPathDB" id="FungiDB:CAGL0M01518g"/>
<dbReference type="eggNOG" id="ENOG502QQ1E">
    <property type="taxonomic scope" value="Eukaryota"/>
</dbReference>
<dbReference type="HOGENOM" id="CLU_679710_0_0_1"/>
<dbReference type="InParanoid" id="Q6FK33"/>
<dbReference type="Proteomes" id="UP000002428">
    <property type="component" value="Chromosome M"/>
</dbReference>
<dbReference type="GO" id="GO:0005743">
    <property type="term" value="C:mitochondrial inner membrane"/>
    <property type="evidence" value="ECO:0007669"/>
    <property type="project" value="UniProtKB-SubCell"/>
</dbReference>
<dbReference type="GO" id="GO:0007007">
    <property type="term" value="P:inner mitochondrial membrane organization"/>
    <property type="evidence" value="ECO:0007669"/>
    <property type="project" value="EnsemblFungi"/>
</dbReference>
<dbReference type="InterPro" id="IPR008839">
    <property type="entry name" value="MDM33_fungi"/>
</dbReference>
<dbReference type="PANTHER" id="PTHR31961">
    <property type="entry name" value="SENSITIVE TO HIGH EXPRESSION PROTEIN 9, MITOCHONDRIAL"/>
    <property type="match status" value="1"/>
</dbReference>
<dbReference type="PANTHER" id="PTHR31961:SF3">
    <property type="entry name" value="SENSITIVE TO HIGH EXPRESSION PROTEIN 9, MITOCHONDRIAL"/>
    <property type="match status" value="1"/>
</dbReference>
<dbReference type="Pfam" id="PF05546">
    <property type="entry name" value="She9_MDM33"/>
    <property type="match status" value="1"/>
</dbReference>